<name>STK40_BOVIN</name>
<gene>
    <name type="primary">STK40</name>
</gene>
<accession>Q17QV9</accession>
<protein>
    <recommendedName>
        <fullName>Serine/threonine-protein kinase 40</fullName>
        <ecNumber>2.7.11.1</ecNumber>
    </recommendedName>
</protein>
<comment type="function">
    <text evidence="1">May be a negative regulator of NF-kappa-B and p53-mediated gene transcription.</text>
</comment>
<comment type="catalytic activity">
    <reaction>
        <text>L-seryl-[protein] + ATP = O-phospho-L-seryl-[protein] + ADP + H(+)</text>
        <dbReference type="Rhea" id="RHEA:17989"/>
        <dbReference type="Rhea" id="RHEA-COMP:9863"/>
        <dbReference type="Rhea" id="RHEA-COMP:11604"/>
        <dbReference type="ChEBI" id="CHEBI:15378"/>
        <dbReference type="ChEBI" id="CHEBI:29999"/>
        <dbReference type="ChEBI" id="CHEBI:30616"/>
        <dbReference type="ChEBI" id="CHEBI:83421"/>
        <dbReference type="ChEBI" id="CHEBI:456216"/>
        <dbReference type="EC" id="2.7.11.1"/>
    </reaction>
</comment>
<comment type="catalytic activity">
    <reaction>
        <text>L-threonyl-[protein] + ATP = O-phospho-L-threonyl-[protein] + ADP + H(+)</text>
        <dbReference type="Rhea" id="RHEA:46608"/>
        <dbReference type="Rhea" id="RHEA-COMP:11060"/>
        <dbReference type="Rhea" id="RHEA-COMP:11605"/>
        <dbReference type="ChEBI" id="CHEBI:15378"/>
        <dbReference type="ChEBI" id="CHEBI:30013"/>
        <dbReference type="ChEBI" id="CHEBI:30616"/>
        <dbReference type="ChEBI" id="CHEBI:61977"/>
        <dbReference type="ChEBI" id="CHEBI:456216"/>
        <dbReference type="EC" id="2.7.11.1"/>
    </reaction>
</comment>
<comment type="subcellular location">
    <subcellularLocation>
        <location evidence="1">Nucleus</location>
    </subcellularLocation>
    <subcellularLocation>
        <location evidence="1">Cytoplasm</location>
    </subcellularLocation>
</comment>
<comment type="similarity">
    <text evidence="5">Belongs to the protein kinase superfamily. CAMK Ser/Thr protein kinase family.</text>
</comment>
<organism>
    <name type="scientific">Bos taurus</name>
    <name type="common">Bovine</name>
    <dbReference type="NCBI Taxonomy" id="9913"/>
    <lineage>
        <taxon>Eukaryota</taxon>
        <taxon>Metazoa</taxon>
        <taxon>Chordata</taxon>
        <taxon>Craniata</taxon>
        <taxon>Vertebrata</taxon>
        <taxon>Euteleostomi</taxon>
        <taxon>Mammalia</taxon>
        <taxon>Eutheria</taxon>
        <taxon>Laurasiatheria</taxon>
        <taxon>Artiodactyla</taxon>
        <taxon>Ruminantia</taxon>
        <taxon>Pecora</taxon>
        <taxon>Bovidae</taxon>
        <taxon>Bovinae</taxon>
        <taxon>Bos</taxon>
    </lineage>
</organism>
<dbReference type="EC" id="2.7.11.1"/>
<dbReference type="EMBL" id="BC118150">
    <property type="protein sequence ID" value="AAI18151.1"/>
    <property type="molecule type" value="mRNA"/>
</dbReference>
<dbReference type="RefSeq" id="NP_001069195.1">
    <property type="nucleotide sequence ID" value="NM_001075727.1"/>
</dbReference>
<dbReference type="RefSeq" id="XP_005204789.1">
    <property type="nucleotide sequence ID" value="XM_005204732.5"/>
</dbReference>
<dbReference type="RefSeq" id="XP_010801923.1">
    <property type="nucleotide sequence ID" value="XM_010803621.4"/>
</dbReference>
<dbReference type="RefSeq" id="XP_010801924.1">
    <property type="nucleotide sequence ID" value="XM_010803622.3"/>
</dbReference>
<dbReference type="RefSeq" id="XP_015321756.1">
    <property type="nucleotide sequence ID" value="XM_015466270.1"/>
</dbReference>
<dbReference type="SMR" id="Q17QV9"/>
<dbReference type="FunCoup" id="Q17QV9">
    <property type="interactions" value="1575"/>
</dbReference>
<dbReference type="STRING" id="9913.ENSBTAP00000061951"/>
<dbReference type="PaxDb" id="9913-ENSBTAP00000021243"/>
<dbReference type="Ensembl" id="ENSBTAT00000021243.6">
    <property type="protein sequence ID" value="ENSBTAP00000021243.5"/>
    <property type="gene ID" value="ENSBTAG00000015969.7"/>
</dbReference>
<dbReference type="GeneID" id="515723"/>
<dbReference type="KEGG" id="bta:515723"/>
<dbReference type="CTD" id="83931"/>
<dbReference type="VEuPathDB" id="HostDB:ENSBTAG00000015969"/>
<dbReference type="VGNC" id="VGNC:35402">
    <property type="gene designation" value="STK40"/>
</dbReference>
<dbReference type="eggNOG" id="KOG0583">
    <property type="taxonomic scope" value="Eukaryota"/>
</dbReference>
<dbReference type="GeneTree" id="ENSGT00950000182986"/>
<dbReference type="HOGENOM" id="CLU_035107_0_0_1"/>
<dbReference type="InParanoid" id="Q17QV9"/>
<dbReference type="OMA" id="HGIFKDR"/>
<dbReference type="OrthoDB" id="410920at2759"/>
<dbReference type="TreeFam" id="TF329785"/>
<dbReference type="Proteomes" id="UP000009136">
    <property type="component" value="Chromosome 3"/>
</dbReference>
<dbReference type="Bgee" id="ENSBTAG00000015969">
    <property type="expression patterns" value="Expressed in infraspinatus muscle and 104 other cell types or tissues"/>
</dbReference>
<dbReference type="GO" id="GO:0005829">
    <property type="term" value="C:cytosol"/>
    <property type="evidence" value="ECO:0007669"/>
    <property type="project" value="Ensembl"/>
</dbReference>
<dbReference type="GO" id="GO:0005654">
    <property type="term" value="C:nucleoplasm"/>
    <property type="evidence" value="ECO:0007669"/>
    <property type="project" value="Ensembl"/>
</dbReference>
<dbReference type="GO" id="GO:0005524">
    <property type="term" value="F:ATP binding"/>
    <property type="evidence" value="ECO:0007669"/>
    <property type="project" value="UniProtKB-KW"/>
</dbReference>
<dbReference type="GO" id="GO:0106310">
    <property type="term" value="F:protein serine kinase activity"/>
    <property type="evidence" value="ECO:0007669"/>
    <property type="project" value="RHEA"/>
</dbReference>
<dbReference type="GO" id="GO:0004674">
    <property type="term" value="F:protein serine/threonine kinase activity"/>
    <property type="evidence" value="ECO:0007669"/>
    <property type="project" value="UniProtKB-KW"/>
</dbReference>
<dbReference type="GO" id="GO:0005977">
    <property type="term" value="P:glycogen metabolic process"/>
    <property type="evidence" value="ECO:0007669"/>
    <property type="project" value="Ensembl"/>
</dbReference>
<dbReference type="GO" id="GO:0048286">
    <property type="term" value="P:lung alveolus development"/>
    <property type="evidence" value="ECO:0007669"/>
    <property type="project" value="Ensembl"/>
</dbReference>
<dbReference type="GO" id="GO:0060425">
    <property type="term" value="P:lung morphogenesis"/>
    <property type="evidence" value="ECO:0007669"/>
    <property type="project" value="Ensembl"/>
</dbReference>
<dbReference type="GO" id="GO:0035264">
    <property type="term" value="P:multicellular organism growth"/>
    <property type="evidence" value="ECO:0007669"/>
    <property type="project" value="Ensembl"/>
</dbReference>
<dbReference type="GO" id="GO:0043066">
    <property type="term" value="P:negative regulation of apoptotic process"/>
    <property type="evidence" value="ECO:0007669"/>
    <property type="project" value="Ensembl"/>
</dbReference>
<dbReference type="GO" id="GO:0010468">
    <property type="term" value="P:regulation of gene expression"/>
    <property type="evidence" value="ECO:0007669"/>
    <property type="project" value="Ensembl"/>
</dbReference>
<dbReference type="GO" id="GO:0043408">
    <property type="term" value="P:regulation of MAPK cascade"/>
    <property type="evidence" value="ECO:0000318"/>
    <property type="project" value="GO_Central"/>
</dbReference>
<dbReference type="GO" id="GO:0003016">
    <property type="term" value="P:respiratory system process"/>
    <property type="evidence" value="ECO:0007669"/>
    <property type="project" value="Ensembl"/>
</dbReference>
<dbReference type="CDD" id="cd13974">
    <property type="entry name" value="STKc_SHIK"/>
    <property type="match status" value="1"/>
</dbReference>
<dbReference type="FunFam" id="1.10.510.10:FF:000269">
    <property type="entry name" value="Serine/threonine-protein kinase 40"/>
    <property type="match status" value="1"/>
</dbReference>
<dbReference type="Gene3D" id="1.10.510.10">
    <property type="entry name" value="Transferase(Phosphotransferase) domain 1"/>
    <property type="match status" value="1"/>
</dbReference>
<dbReference type="InterPro" id="IPR011009">
    <property type="entry name" value="Kinase-like_dom_sf"/>
</dbReference>
<dbReference type="InterPro" id="IPR000719">
    <property type="entry name" value="Prot_kinase_dom"/>
</dbReference>
<dbReference type="InterPro" id="IPR024236">
    <property type="entry name" value="Ser/Thr_kinase_40"/>
</dbReference>
<dbReference type="InterPro" id="IPR008271">
    <property type="entry name" value="Ser/Thr_kinase_AS"/>
</dbReference>
<dbReference type="InterPro" id="IPR024104">
    <property type="entry name" value="Tribbles/Ser_Thr_kinase_40"/>
</dbReference>
<dbReference type="PANTHER" id="PTHR22961">
    <property type="entry name" value="SER/THR PROTEIN KINASE-TRB"/>
    <property type="match status" value="1"/>
</dbReference>
<dbReference type="PANTHER" id="PTHR22961:SF16">
    <property type="entry name" value="SERINE_THREONINE-PROTEIN KINASE 40"/>
    <property type="match status" value="1"/>
</dbReference>
<dbReference type="Pfam" id="PF00069">
    <property type="entry name" value="Pkinase"/>
    <property type="match status" value="1"/>
</dbReference>
<dbReference type="SMART" id="SM00220">
    <property type="entry name" value="S_TKc"/>
    <property type="match status" value="1"/>
</dbReference>
<dbReference type="SUPFAM" id="SSF56112">
    <property type="entry name" value="Protein kinase-like (PK-like)"/>
    <property type="match status" value="1"/>
</dbReference>
<dbReference type="PROSITE" id="PS50011">
    <property type="entry name" value="PROTEIN_KINASE_DOM"/>
    <property type="match status" value="1"/>
</dbReference>
<dbReference type="PROSITE" id="PS00108">
    <property type="entry name" value="PROTEIN_KINASE_ST"/>
    <property type="match status" value="1"/>
</dbReference>
<evidence type="ECO:0000250" key="1"/>
<evidence type="ECO:0000255" key="2">
    <source>
        <dbReference type="PROSITE-ProRule" id="PRU00159"/>
    </source>
</evidence>
<evidence type="ECO:0000255" key="3">
    <source>
        <dbReference type="PROSITE-ProRule" id="PRU10027"/>
    </source>
</evidence>
<evidence type="ECO:0000256" key="4">
    <source>
        <dbReference type="SAM" id="MobiDB-lite"/>
    </source>
</evidence>
<evidence type="ECO:0000305" key="5"/>
<keyword id="KW-0067">ATP-binding</keyword>
<keyword id="KW-0963">Cytoplasm</keyword>
<keyword id="KW-0418">Kinase</keyword>
<keyword id="KW-0547">Nucleotide-binding</keyword>
<keyword id="KW-0539">Nucleus</keyword>
<keyword id="KW-1185">Reference proteome</keyword>
<keyword id="KW-0723">Serine/threonine-protein kinase</keyword>
<keyword id="KW-0808">Transferase</keyword>
<sequence length="436" mass="48929">MKRRASDRGAGETSARAKALGSGISGNNAKRAGPFILGPRLGNSPVPSIVQCLARKDGTDDFYQLKILTLEERGDQGIESQEERQGKMLLHTEYSLLSLLHTQDGVVHHHGLFQDRTCEVVEDAESNRMVKKMKKRICLVLDCLCAHDFSDKTADLINLQHYVIKEKRLSERETVVIFYDVVRVVEALHQKNVVHRDLKLGNMVLSKRTHRITITNFCLGKHLVSEGDLLKDQRGSPAYISPDVLSGRPYRGKPSDMWALGVVLFTMLYGQFPFYDSIPQELFRKIKAAEYTIPEDGRVSENTVCLIRKLLVLDPQQRLAAADVLEALSSIIASWQSLSSLSGPLQVVPDIDDQMSNADSSQEAKVTEECSQYEFENYMRQQLLLAEEKSSVHEARSWVPKRQSGAGVPPVRRLGHDAQPVNPLDAAILAQRYLRK</sequence>
<reference key="1">
    <citation type="submission" date="2006-06" db="EMBL/GenBank/DDBJ databases">
        <authorList>
            <consortium name="NIH - Mammalian Gene Collection (MGC) project"/>
        </authorList>
    </citation>
    <scope>NUCLEOTIDE SEQUENCE [LARGE SCALE MRNA]</scope>
    <source>
        <strain>Hereford</strain>
        <tissue>Ascending colon</tissue>
    </source>
</reference>
<proteinExistence type="evidence at transcript level"/>
<feature type="chain" id="PRO_0000252260" description="Serine/threonine-protein kinase 40">
    <location>
        <begin position="1"/>
        <end position="436"/>
    </location>
</feature>
<feature type="domain" description="Protein kinase" evidence="2">
    <location>
        <begin position="35"/>
        <end position="332"/>
    </location>
</feature>
<feature type="region of interest" description="Disordered" evidence="4">
    <location>
        <begin position="1"/>
        <end position="25"/>
    </location>
</feature>
<feature type="region of interest" description="Disordered" evidence="4">
    <location>
        <begin position="396"/>
        <end position="417"/>
    </location>
</feature>
<feature type="compositionally biased region" description="Basic and acidic residues" evidence="4">
    <location>
        <begin position="1"/>
        <end position="10"/>
    </location>
</feature>
<feature type="active site" description="Proton acceptor" evidence="2 3">
    <location>
        <position position="197"/>
    </location>
</feature>
<feature type="binding site" evidence="2">
    <location>
        <begin position="41"/>
        <end position="49"/>
    </location>
    <ligand>
        <name>ATP</name>
        <dbReference type="ChEBI" id="CHEBI:30616"/>
    </ligand>
</feature>
<feature type="binding site" evidence="2">
    <location>
        <position position="66"/>
    </location>
    <ligand>
        <name>ATP</name>
        <dbReference type="ChEBI" id="CHEBI:30616"/>
    </ligand>
</feature>